<protein>
    <recommendedName>
        <fullName evidence="1">5-methyltetrahydropteroyltriglutamate--homocysteine methyltransferase</fullName>
        <ecNumber evidence="1">2.1.1.14</ecNumber>
    </recommendedName>
    <alternativeName>
        <fullName evidence="1">Cobalamin-independent methionine synthase</fullName>
    </alternativeName>
    <alternativeName>
        <fullName evidence="1">Methionine synthase, vitamin-B12 independent isozyme</fullName>
    </alternativeName>
</protein>
<keyword id="KW-0028">Amino-acid biosynthesis</keyword>
<keyword id="KW-0479">Metal-binding</keyword>
<keyword id="KW-0486">Methionine biosynthesis</keyword>
<keyword id="KW-0489">Methyltransferase</keyword>
<keyword id="KW-0677">Repeat</keyword>
<keyword id="KW-0808">Transferase</keyword>
<keyword id="KW-0862">Zinc</keyword>
<organism>
    <name type="scientific">Burkholderia mallei (strain NCTC 10247)</name>
    <dbReference type="NCBI Taxonomy" id="320389"/>
    <lineage>
        <taxon>Bacteria</taxon>
        <taxon>Pseudomonadati</taxon>
        <taxon>Pseudomonadota</taxon>
        <taxon>Betaproteobacteria</taxon>
        <taxon>Burkholderiales</taxon>
        <taxon>Burkholderiaceae</taxon>
        <taxon>Burkholderia</taxon>
        <taxon>pseudomallei group</taxon>
    </lineage>
</organism>
<evidence type="ECO:0000255" key="1">
    <source>
        <dbReference type="HAMAP-Rule" id="MF_00172"/>
    </source>
</evidence>
<sequence>MTTAHILGFPRIGAQRELKFALERYWRDGASADAERALVDTGRALRAEHWRIERDAGLDCVTVGDFAWYDHVLTTLAHVGGLPRRFGFDARALTLADYFAAARGNAAQPAMEMTKWFDTNYHYLVPEYSPATTFGPGVEWLFDEVREARALGYRAKAALVGPLTLLWLGKARDGLVERLALLPRLVPAYRALLARLREAGVDWVQIDEPIFSLDLPDAWRDAARPTYEALAPGAPKLLVATYFDDASEHAALLKALPVAGLHVDLVRADAQLDAFVADYPADKVLSCGIVDGRNVWRNDLDRSLARLAPVRDALGERLWVATSCSLLHVPVDLAHEPRLDEELKTWLAFAAQKTREVAALRDALVKGRAAVAAEFDDAAVVAAARRTSARIHNPLVKRRVAALTDADARRASAYSVRAAAQRARFGLPLLPTTTIGSFPQTPEIRRARAAFKQGVLDHLGYLEAMREQVRIAIDKQLAYGLDVLVHGEAERNDMVEYFGELLWGFAITSNGWVQSYGSRCVKPPLVYGDVYLPEPMTVGWASYAQSLSAKPVKGMLTGPVTMLQWSFVRDDQPRATTALQIALALRQETLDLEKAGIGMIQIDEPALREGLPLKARERAAYLDWAVRAFGIAASGVADDTQIHTHMCYSEFGDILPSIAALDADVISIETTRSNMELLDAFETFDYPNEIGPGVYDIHSPRVPDADEIERLILLALERIPAQRLWVNPDCGLKTREWRQVDAALAAMVDAAKRVRQKVEEAAPA</sequence>
<proteinExistence type="inferred from homology"/>
<accession>A3MHJ9</accession>
<reference key="1">
    <citation type="journal article" date="2010" name="Genome Biol. Evol.">
        <title>Continuing evolution of Burkholderia mallei through genome reduction and large-scale rearrangements.</title>
        <authorList>
            <person name="Losada L."/>
            <person name="Ronning C.M."/>
            <person name="DeShazer D."/>
            <person name="Woods D."/>
            <person name="Fedorova N."/>
            <person name="Kim H.S."/>
            <person name="Shabalina S.A."/>
            <person name="Pearson T.R."/>
            <person name="Brinkac L."/>
            <person name="Tan P."/>
            <person name="Nandi T."/>
            <person name="Crabtree J."/>
            <person name="Badger J."/>
            <person name="Beckstrom-Sternberg S."/>
            <person name="Saqib M."/>
            <person name="Schutzer S.E."/>
            <person name="Keim P."/>
            <person name="Nierman W.C."/>
        </authorList>
    </citation>
    <scope>NUCLEOTIDE SEQUENCE [LARGE SCALE GENOMIC DNA]</scope>
    <source>
        <strain>NCTC 10247</strain>
    </source>
</reference>
<gene>
    <name evidence="1" type="primary">metE</name>
    <name type="ordered locus">BMA10247_0159</name>
</gene>
<name>METE_BURM7</name>
<feature type="chain" id="PRO_1000071600" description="5-methyltetrahydropteroyltriglutamate--homocysteine methyltransferase">
    <location>
        <begin position="1"/>
        <end position="764"/>
    </location>
</feature>
<feature type="active site" description="Proton donor" evidence="1">
    <location>
        <position position="698"/>
    </location>
</feature>
<feature type="binding site" evidence="1">
    <location>
        <begin position="16"/>
        <end position="19"/>
    </location>
    <ligand>
        <name>5-methyltetrahydropteroyltri-L-glutamate</name>
        <dbReference type="ChEBI" id="CHEBI:58207"/>
    </ligand>
</feature>
<feature type="binding site" evidence="1">
    <location>
        <position position="115"/>
    </location>
    <ligand>
        <name>5-methyltetrahydropteroyltri-L-glutamate</name>
        <dbReference type="ChEBI" id="CHEBI:58207"/>
    </ligand>
</feature>
<feature type="binding site" evidence="1">
    <location>
        <begin position="435"/>
        <end position="437"/>
    </location>
    <ligand>
        <name>L-homocysteine</name>
        <dbReference type="ChEBI" id="CHEBI:58199"/>
    </ligand>
</feature>
<feature type="binding site" evidence="1">
    <location>
        <begin position="435"/>
        <end position="437"/>
    </location>
    <ligand>
        <name>L-methionine</name>
        <dbReference type="ChEBI" id="CHEBI:57844"/>
    </ligand>
</feature>
<feature type="binding site" evidence="1">
    <location>
        <position position="488"/>
    </location>
    <ligand>
        <name>L-homocysteine</name>
        <dbReference type="ChEBI" id="CHEBI:58199"/>
    </ligand>
</feature>
<feature type="binding site" evidence="1">
    <location>
        <position position="488"/>
    </location>
    <ligand>
        <name>L-methionine</name>
        <dbReference type="ChEBI" id="CHEBI:57844"/>
    </ligand>
</feature>
<feature type="binding site" evidence="1">
    <location>
        <begin position="519"/>
        <end position="520"/>
    </location>
    <ligand>
        <name>5-methyltetrahydropteroyltri-L-glutamate</name>
        <dbReference type="ChEBI" id="CHEBI:58207"/>
    </ligand>
</feature>
<feature type="binding site" evidence="1">
    <location>
        <position position="565"/>
    </location>
    <ligand>
        <name>5-methyltetrahydropteroyltri-L-glutamate</name>
        <dbReference type="ChEBI" id="CHEBI:58207"/>
    </ligand>
</feature>
<feature type="binding site" evidence="1">
    <location>
        <position position="603"/>
    </location>
    <ligand>
        <name>L-homocysteine</name>
        <dbReference type="ChEBI" id="CHEBI:58199"/>
    </ligand>
</feature>
<feature type="binding site" evidence="1">
    <location>
        <position position="603"/>
    </location>
    <ligand>
        <name>L-methionine</name>
        <dbReference type="ChEBI" id="CHEBI:57844"/>
    </ligand>
</feature>
<feature type="binding site" evidence="1">
    <location>
        <position position="609"/>
    </location>
    <ligand>
        <name>5-methyltetrahydropteroyltri-L-glutamate</name>
        <dbReference type="ChEBI" id="CHEBI:58207"/>
    </ligand>
</feature>
<feature type="binding site" evidence="1">
    <location>
        <position position="645"/>
    </location>
    <ligand>
        <name>Zn(2+)</name>
        <dbReference type="ChEBI" id="CHEBI:29105"/>
        <note>catalytic</note>
    </ligand>
</feature>
<feature type="binding site" evidence="1">
    <location>
        <position position="647"/>
    </location>
    <ligand>
        <name>Zn(2+)</name>
        <dbReference type="ChEBI" id="CHEBI:29105"/>
        <note>catalytic</note>
    </ligand>
</feature>
<feature type="binding site" evidence="1">
    <location>
        <position position="669"/>
    </location>
    <ligand>
        <name>Zn(2+)</name>
        <dbReference type="ChEBI" id="CHEBI:29105"/>
        <note>catalytic</note>
    </ligand>
</feature>
<feature type="binding site" evidence="1">
    <location>
        <position position="730"/>
    </location>
    <ligand>
        <name>Zn(2+)</name>
        <dbReference type="ChEBI" id="CHEBI:29105"/>
        <note>catalytic</note>
    </ligand>
</feature>
<dbReference type="EC" id="2.1.1.14" evidence="1"/>
<dbReference type="EMBL" id="CP000548">
    <property type="protein sequence ID" value="ABO05790.1"/>
    <property type="molecule type" value="Genomic_DNA"/>
</dbReference>
<dbReference type="RefSeq" id="WP_004189599.1">
    <property type="nucleotide sequence ID" value="NZ_CP007802.1"/>
</dbReference>
<dbReference type="SMR" id="A3MHJ9"/>
<dbReference type="GeneID" id="92978235"/>
<dbReference type="KEGG" id="bmaz:BM44_2827"/>
<dbReference type="KEGG" id="bmn:BMA10247_0159"/>
<dbReference type="PATRIC" id="fig|320389.8.peg.3191"/>
<dbReference type="UniPathway" id="UPA00051">
    <property type="reaction ID" value="UER00082"/>
</dbReference>
<dbReference type="GO" id="GO:0003871">
    <property type="term" value="F:5-methyltetrahydropteroyltriglutamate-homocysteine S-methyltransferase activity"/>
    <property type="evidence" value="ECO:0007669"/>
    <property type="project" value="UniProtKB-UniRule"/>
</dbReference>
<dbReference type="GO" id="GO:0008270">
    <property type="term" value="F:zinc ion binding"/>
    <property type="evidence" value="ECO:0007669"/>
    <property type="project" value="InterPro"/>
</dbReference>
<dbReference type="GO" id="GO:0009086">
    <property type="term" value="P:methionine biosynthetic process"/>
    <property type="evidence" value="ECO:0007669"/>
    <property type="project" value="UniProtKB-UniRule"/>
</dbReference>
<dbReference type="GO" id="GO:0032259">
    <property type="term" value="P:methylation"/>
    <property type="evidence" value="ECO:0007669"/>
    <property type="project" value="UniProtKB-KW"/>
</dbReference>
<dbReference type="CDD" id="cd03311">
    <property type="entry name" value="CIMS_C_terminal_like"/>
    <property type="match status" value="1"/>
</dbReference>
<dbReference type="CDD" id="cd03312">
    <property type="entry name" value="CIMS_N_terminal_like"/>
    <property type="match status" value="1"/>
</dbReference>
<dbReference type="Gene3D" id="3.20.20.210">
    <property type="match status" value="2"/>
</dbReference>
<dbReference type="HAMAP" id="MF_00172">
    <property type="entry name" value="Meth_synth"/>
    <property type="match status" value="1"/>
</dbReference>
<dbReference type="InterPro" id="IPR013215">
    <property type="entry name" value="Cbl-indep_Met_Synth_N"/>
</dbReference>
<dbReference type="InterPro" id="IPR006276">
    <property type="entry name" value="Cobalamin-indep_Met_synthase"/>
</dbReference>
<dbReference type="InterPro" id="IPR002629">
    <property type="entry name" value="Met_Synth_C/arc"/>
</dbReference>
<dbReference type="InterPro" id="IPR038071">
    <property type="entry name" value="UROD/MetE-like_sf"/>
</dbReference>
<dbReference type="NCBIfam" id="TIGR01371">
    <property type="entry name" value="met_syn_B12ind"/>
    <property type="match status" value="1"/>
</dbReference>
<dbReference type="NCBIfam" id="NF003556">
    <property type="entry name" value="PRK05222.1"/>
    <property type="match status" value="1"/>
</dbReference>
<dbReference type="PANTHER" id="PTHR30519">
    <property type="entry name" value="5-METHYLTETRAHYDROPTEROYLTRIGLUTAMATE--HOMOCYSTEINE METHYLTRANSFERASE"/>
    <property type="match status" value="1"/>
</dbReference>
<dbReference type="Pfam" id="PF08267">
    <property type="entry name" value="Meth_synt_1"/>
    <property type="match status" value="1"/>
</dbReference>
<dbReference type="Pfam" id="PF01717">
    <property type="entry name" value="Meth_synt_2"/>
    <property type="match status" value="1"/>
</dbReference>
<dbReference type="PIRSF" id="PIRSF000382">
    <property type="entry name" value="MeTrfase_B12_ind"/>
    <property type="match status" value="1"/>
</dbReference>
<dbReference type="SUPFAM" id="SSF51726">
    <property type="entry name" value="UROD/MetE-like"/>
    <property type="match status" value="2"/>
</dbReference>
<comment type="function">
    <text evidence="1">Catalyzes the transfer of a methyl group from 5-methyltetrahydrofolate to homocysteine resulting in methionine formation.</text>
</comment>
<comment type="catalytic activity">
    <reaction evidence="1">
        <text>5-methyltetrahydropteroyltri-L-glutamate + L-homocysteine = tetrahydropteroyltri-L-glutamate + L-methionine</text>
        <dbReference type="Rhea" id="RHEA:21196"/>
        <dbReference type="ChEBI" id="CHEBI:57844"/>
        <dbReference type="ChEBI" id="CHEBI:58140"/>
        <dbReference type="ChEBI" id="CHEBI:58199"/>
        <dbReference type="ChEBI" id="CHEBI:58207"/>
        <dbReference type="EC" id="2.1.1.14"/>
    </reaction>
</comment>
<comment type="cofactor">
    <cofactor evidence="1">
        <name>Zn(2+)</name>
        <dbReference type="ChEBI" id="CHEBI:29105"/>
    </cofactor>
    <text evidence="1">Binds 1 zinc ion per subunit.</text>
</comment>
<comment type="pathway">
    <text evidence="1">Amino-acid biosynthesis; L-methionine biosynthesis via de novo pathway; L-methionine from L-homocysteine (MetE route): step 1/1.</text>
</comment>
<comment type="similarity">
    <text evidence="1">Belongs to the vitamin-B12 independent methionine synthase family.</text>
</comment>